<accession>Q6NN55</accession>
<accession>A0A0B4LG01</accession>
<organism>
    <name type="scientific">Drosophila melanogaster</name>
    <name type="common">Fruit fly</name>
    <dbReference type="NCBI Taxonomy" id="7227"/>
    <lineage>
        <taxon>Eukaryota</taxon>
        <taxon>Metazoa</taxon>
        <taxon>Ecdysozoa</taxon>
        <taxon>Arthropoda</taxon>
        <taxon>Hexapoda</taxon>
        <taxon>Insecta</taxon>
        <taxon>Pterygota</taxon>
        <taxon>Neoptera</taxon>
        <taxon>Endopterygota</taxon>
        <taxon>Diptera</taxon>
        <taxon>Brachycera</taxon>
        <taxon>Muscomorpha</taxon>
        <taxon>Ephydroidea</taxon>
        <taxon>Drosophilidae</taxon>
        <taxon>Drosophila</taxon>
        <taxon>Sophophora</taxon>
    </lineage>
</organism>
<reference key="1">
    <citation type="journal article" date="2000" name="Science">
        <title>The genome sequence of Drosophila melanogaster.</title>
        <authorList>
            <person name="Adams M.D."/>
            <person name="Celniker S.E."/>
            <person name="Holt R.A."/>
            <person name="Evans C.A."/>
            <person name="Gocayne J.D."/>
            <person name="Amanatides P.G."/>
            <person name="Scherer S.E."/>
            <person name="Li P.W."/>
            <person name="Hoskins R.A."/>
            <person name="Galle R.F."/>
            <person name="George R.A."/>
            <person name="Lewis S.E."/>
            <person name="Richards S."/>
            <person name="Ashburner M."/>
            <person name="Henderson S.N."/>
            <person name="Sutton G.G."/>
            <person name="Wortman J.R."/>
            <person name="Yandell M.D."/>
            <person name="Zhang Q."/>
            <person name="Chen L.X."/>
            <person name="Brandon R.C."/>
            <person name="Rogers Y.-H.C."/>
            <person name="Blazej R.G."/>
            <person name="Champe M."/>
            <person name="Pfeiffer B.D."/>
            <person name="Wan K.H."/>
            <person name="Doyle C."/>
            <person name="Baxter E.G."/>
            <person name="Helt G."/>
            <person name="Nelson C.R."/>
            <person name="Miklos G.L.G."/>
            <person name="Abril J.F."/>
            <person name="Agbayani A."/>
            <person name="An H.-J."/>
            <person name="Andrews-Pfannkoch C."/>
            <person name="Baldwin D."/>
            <person name="Ballew R.M."/>
            <person name="Basu A."/>
            <person name="Baxendale J."/>
            <person name="Bayraktaroglu L."/>
            <person name="Beasley E.M."/>
            <person name="Beeson K.Y."/>
            <person name="Benos P.V."/>
            <person name="Berman B.P."/>
            <person name="Bhandari D."/>
            <person name="Bolshakov S."/>
            <person name="Borkova D."/>
            <person name="Botchan M.R."/>
            <person name="Bouck J."/>
            <person name="Brokstein P."/>
            <person name="Brottier P."/>
            <person name="Burtis K.C."/>
            <person name="Busam D.A."/>
            <person name="Butler H."/>
            <person name="Cadieu E."/>
            <person name="Center A."/>
            <person name="Chandra I."/>
            <person name="Cherry J.M."/>
            <person name="Cawley S."/>
            <person name="Dahlke C."/>
            <person name="Davenport L.B."/>
            <person name="Davies P."/>
            <person name="de Pablos B."/>
            <person name="Delcher A."/>
            <person name="Deng Z."/>
            <person name="Mays A.D."/>
            <person name="Dew I."/>
            <person name="Dietz S.M."/>
            <person name="Dodson K."/>
            <person name="Doup L.E."/>
            <person name="Downes M."/>
            <person name="Dugan-Rocha S."/>
            <person name="Dunkov B.C."/>
            <person name="Dunn P."/>
            <person name="Durbin K.J."/>
            <person name="Evangelista C.C."/>
            <person name="Ferraz C."/>
            <person name="Ferriera S."/>
            <person name="Fleischmann W."/>
            <person name="Fosler C."/>
            <person name="Gabrielian A.E."/>
            <person name="Garg N.S."/>
            <person name="Gelbart W.M."/>
            <person name="Glasser K."/>
            <person name="Glodek A."/>
            <person name="Gong F."/>
            <person name="Gorrell J.H."/>
            <person name="Gu Z."/>
            <person name="Guan P."/>
            <person name="Harris M."/>
            <person name="Harris N.L."/>
            <person name="Harvey D.A."/>
            <person name="Heiman T.J."/>
            <person name="Hernandez J.R."/>
            <person name="Houck J."/>
            <person name="Hostin D."/>
            <person name="Houston K.A."/>
            <person name="Howland T.J."/>
            <person name="Wei M.-H."/>
            <person name="Ibegwam C."/>
            <person name="Jalali M."/>
            <person name="Kalush F."/>
            <person name="Karpen G.H."/>
            <person name="Ke Z."/>
            <person name="Kennison J.A."/>
            <person name="Ketchum K.A."/>
            <person name="Kimmel B.E."/>
            <person name="Kodira C.D."/>
            <person name="Kraft C.L."/>
            <person name="Kravitz S."/>
            <person name="Kulp D."/>
            <person name="Lai Z."/>
            <person name="Lasko P."/>
            <person name="Lei Y."/>
            <person name="Levitsky A.A."/>
            <person name="Li J.H."/>
            <person name="Li Z."/>
            <person name="Liang Y."/>
            <person name="Lin X."/>
            <person name="Liu X."/>
            <person name="Mattei B."/>
            <person name="McIntosh T.C."/>
            <person name="McLeod M.P."/>
            <person name="McPherson D."/>
            <person name="Merkulov G."/>
            <person name="Milshina N.V."/>
            <person name="Mobarry C."/>
            <person name="Morris J."/>
            <person name="Moshrefi A."/>
            <person name="Mount S.M."/>
            <person name="Moy M."/>
            <person name="Murphy B."/>
            <person name="Murphy L."/>
            <person name="Muzny D.M."/>
            <person name="Nelson D.L."/>
            <person name="Nelson D.R."/>
            <person name="Nelson K.A."/>
            <person name="Nixon K."/>
            <person name="Nusskern D.R."/>
            <person name="Pacleb J.M."/>
            <person name="Palazzolo M."/>
            <person name="Pittman G.S."/>
            <person name="Pan S."/>
            <person name="Pollard J."/>
            <person name="Puri V."/>
            <person name="Reese M.G."/>
            <person name="Reinert K."/>
            <person name="Remington K."/>
            <person name="Saunders R.D.C."/>
            <person name="Scheeler F."/>
            <person name="Shen H."/>
            <person name="Shue B.C."/>
            <person name="Siden-Kiamos I."/>
            <person name="Simpson M."/>
            <person name="Skupski M.P."/>
            <person name="Smith T.J."/>
            <person name="Spier E."/>
            <person name="Spradling A.C."/>
            <person name="Stapleton M."/>
            <person name="Strong R."/>
            <person name="Sun E."/>
            <person name="Svirskas R."/>
            <person name="Tector C."/>
            <person name="Turner R."/>
            <person name="Venter E."/>
            <person name="Wang A.H."/>
            <person name="Wang X."/>
            <person name="Wang Z.-Y."/>
            <person name="Wassarman D.A."/>
            <person name="Weinstock G.M."/>
            <person name="Weissenbach J."/>
            <person name="Williams S.M."/>
            <person name="Woodage T."/>
            <person name="Worley K.C."/>
            <person name="Wu D."/>
            <person name="Yang S."/>
            <person name="Yao Q.A."/>
            <person name="Ye J."/>
            <person name="Yeh R.-F."/>
            <person name="Zaveri J.S."/>
            <person name="Zhan M."/>
            <person name="Zhang G."/>
            <person name="Zhao Q."/>
            <person name="Zheng L."/>
            <person name="Zheng X.H."/>
            <person name="Zhong F.N."/>
            <person name="Zhong W."/>
            <person name="Zhou X."/>
            <person name="Zhu S.C."/>
            <person name="Zhu X."/>
            <person name="Smith H.O."/>
            <person name="Gibbs R.A."/>
            <person name="Myers E.W."/>
            <person name="Rubin G.M."/>
            <person name="Venter J.C."/>
        </authorList>
    </citation>
    <scope>NUCLEOTIDE SEQUENCE [LARGE SCALE GENOMIC DNA]</scope>
    <source>
        <strain>Berkeley</strain>
    </source>
</reference>
<reference key="2">
    <citation type="journal article" date="2002" name="Genome Biol.">
        <title>Annotation of the Drosophila melanogaster euchromatic genome: a systematic review.</title>
        <authorList>
            <person name="Misra S."/>
            <person name="Crosby M.A."/>
            <person name="Mungall C.J."/>
            <person name="Matthews B.B."/>
            <person name="Campbell K.S."/>
            <person name="Hradecky P."/>
            <person name="Huang Y."/>
            <person name="Kaminker J.S."/>
            <person name="Millburn G.H."/>
            <person name="Prochnik S.E."/>
            <person name="Smith C.D."/>
            <person name="Tupy J.L."/>
            <person name="Whitfield E.J."/>
            <person name="Bayraktaroglu L."/>
            <person name="Berman B.P."/>
            <person name="Bettencourt B.R."/>
            <person name="Celniker S.E."/>
            <person name="de Grey A.D.N.J."/>
            <person name="Drysdale R.A."/>
            <person name="Harris N.L."/>
            <person name="Richter J."/>
            <person name="Russo S."/>
            <person name="Schroeder A.J."/>
            <person name="Shu S.Q."/>
            <person name="Stapleton M."/>
            <person name="Yamada C."/>
            <person name="Ashburner M."/>
            <person name="Gelbart W.M."/>
            <person name="Rubin G.M."/>
            <person name="Lewis S.E."/>
        </authorList>
    </citation>
    <scope>GENOME REANNOTATION</scope>
    <source>
        <strain>Berkeley</strain>
    </source>
</reference>
<reference evidence="8" key="3">
    <citation type="submission" date="2004-01" db="EMBL/GenBank/DDBJ databases">
        <authorList>
            <person name="Stapleton M."/>
            <person name="Carlson J."/>
            <person name="Chavez C."/>
            <person name="Frise E."/>
            <person name="George R."/>
            <person name="Pacleb J."/>
            <person name="Park S."/>
            <person name="Wan K."/>
            <person name="Yu C."/>
            <person name="Rubin G.M."/>
            <person name="Celniker S."/>
        </authorList>
    </citation>
    <scope>NUCLEOTIDE SEQUENCE [LARGE SCALE MRNA]</scope>
    <source>
        <strain evidence="8">Berkeley</strain>
    </source>
</reference>
<reference key="4">
    <citation type="journal article" date="2009" name="Mol. Biol. Cell">
        <title>Drosophila lysophospholipid acyltransferases are specifically required for germ cell development.</title>
        <authorList>
            <person name="Steinhauer J."/>
            <person name="Gijon M.A."/>
            <person name="Riekhof W.R."/>
            <person name="Voelker D.R."/>
            <person name="Murphy R.C."/>
            <person name="Treisman J.E."/>
        </authorList>
    </citation>
    <scope>FUNCTION</scope>
    <scope>CATALYTIC ACTIVITY</scope>
    <scope>PATHWAY</scope>
    <scope>SUBCELLULAR LOCATION</scope>
</reference>
<dbReference type="EC" id="2.3.1.-" evidence="4"/>
<dbReference type="EC" id="2.3.1.23" evidence="4"/>
<dbReference type="EC" id="2.3.1.n6" evidence="4"/>
<dbReference type="EC" id="2.3.1.n7" evidence="4"/>
<dbReference type="EMBL" id="AE013599">
    <property type="protein sequence ID" value="AAF58858.1"/>
    <property type="molecule type" value="Genomic_DNA"/>
</dbReference>
<dbReference type="EMBL" id="AE013599">
    <property type="protein sequence ID" value="AHN56063.1"/>
    <property type="molecule type" value="Genomic_DNA"/>
</dbReference>
<dbReference type="EMBL" id="AE013599">
    <property type="protein sequence ID" value="AHN56065.1"/>
    <property type="molecule type" value="Genomic_DNA"/>
</dbReference>
<dbReference type="EMBL" id="AE013599">
    <property type="protein sequence ID" value="AHN56064.1"/>
    <property type="molecule type" value="Genomic_DNA"/>
</dbReference>
<dbReference type="EMBL" id="BT011439">
    <property type="protein sequence ID" value="AAR99097.1"/>
    <property type="molecule type" value="mRNA"/>
</dbReference>
<dbReference type="RefSeq" id="NP_001286265.1">
    <molecule id="Q6NN55-1"/>
    <property type="nucleotide sequence ID" value="NM_001299336.1"/>
</dbReference>
<dbReference type="RefSeq" id="NP_001286266.1">
    <molecule id="Q6NN55-2"/>
    <property type="nucleotide sequence ID" value="NM_001299337.1"/>
</dbReference>
<dbReference type="RefSeq" id="NP_001286267.1">
    <molecule id="Q6NN55-1"/>
    <property type="nucleotide sequence ID" value="NM_001299338.1"/>
</dbReference>
<dbReference type="RefSeq" id="NP_610546.1">
    <molecule id="Q6NN55-1"/>
    <property type="nucleotide sequence ID" value="NM_136702.3"/>
</dbReference>
<dbReference type="SMR" id="Q6NN55"/>
<dbReference type="FunCoup" id="Q6NN55">
    <property type="interactions" value="706"/>
</dbReference>
<dbReference type="STRING" id="7227.FBpp0311694"/>
<dbReference type="SwissLipids" id="SLP:000001063"/>
<dbReference type="PaxDb" id="7227-FBpp0087520"/>
<dbReference type="DNASU" id="36045"/>
<dbReference type="EnsemblMetazoa" id="FBtr0088434">
    <molecule id="Q6NN55-1"/>
    <property type="protein sequence ID" value="FBpp0087520"/>
    <property type="gene ID" value="FBgn0033476"/>
</dbReference>
<dbReference type="EnsemblMetazoa" id="FBtr0339416">
    <molecule id="Q6NN55-1"/>
    <property type="protein sequence ID" value="FBpp0308504"/>
    <property type="gene ID" value="FBgn0033476"/>
</dbReference>
<dbReference type="EnsemblMetazoa" id="FBtr0345629">
    <molecule id="Q6NN55-2"/>
    <property type="protein sequence ID" value="FBpp0311693"/>
    <property type="gene ID" value="FBgn0033476"/>
</dbReference>
<dbReference type="EnsemblMetazoa" id="FBtr0345630">
    <molecule id="Q6NN55-1"/>
    <property type="protein sequence ID" value="FBpp0311694"/>
    <property type="gene ID" value="FBgn0033476"/>
</dbReference>
<dbReference type="GeneID" id="36045"/>
<dbReference type="KEGG" id="dme:Dmel_CG18445"/>
<dbReference type="UCSC" id="CG18445-RA">
    <molecule id="Q6NN55-1"/>
    <property type="organism name" value="d. melanogaster"/>
</dbReference>
<dbReference type="AGR" id="FB:FBgn0033476"/>
<dbReference type="CTD" id="36045"/>
<dbReference type="FlyBase" id="FBgn0033476">
    <property type="gene designation" value="oys"/>
</dbReference>
<dbReference type="VEuPathDB" id="VectorBase:FBgn0033476"/>
<dbReference type="eggNOG" id="KOG2704">
    <property type="taxonomic scope" value="Eukaryota"/>
</dbReference>
<dbReference type="GeneTree" id="ENSGT01030000234564"/>
<dbReference type="HOGENOM" id="CLU_011340_4_0_1"/>
<dbReference type="InParanoid" id="Q6NN55"/>
<dbReference type="OMA" id="WHGTRPG"/>
<dbReference type="OrthoDB" id="286734at2759"/>
<dbReference type="PhylomeDB" id="Q6NN55"/>
<dbReference type="Reactome" id="R-DME-1482788">
    <property type="pathway name" value="Acyl chain remodelling of PC"/>
</dbReference>
<dbReference type="Reactome" id="R-DME-1482801">
    <property type="pathway name" value="Acyl chain remodelling of PS"/>
</dbReference>
<dbReference type="Reactome" id="R-DME-1482839">
    <property type="pathway name" value="Acyl chain remodelling of PE"/>
</dbReference>
<dbReference type="UniPathway" id="UPA00085"/>
<dbReference type="BioGRID-ORCS" id="36045">
    <property type="hits" value="0 hits in 3 CRISPR screens"/>
</dbReference>
<dbReference type="GenomeRNAi" id="36045"/>
<dbReference type="PRO" id="PR:Q6NN55"/>
<dbReference type="Proteomes" id="UP000000803">
    <property type="component" value="Chromosome 2R"/>
</dbReference>
<dbReference type="Bgee" id="FBgn0033476">
    <property type="expression patterns" value="Expressed in indirect flight muscle cell (Drosophila) in body wall and 234 other cell types or tissues"/>
</dbReference>
<dbReference type="ExpressionAtlas" id="Q6NN55">
    <property type="expression patterns" value="baseline and differential"/>
</dbReference>
<dbReference type="GO" id="GO:0005783">
    <property type="term" value="C:endoplasmic reticulum"/>
    <property type="evidence" value="ECO:0007669"/>
    <property type="project" value="UniProtKB-SubCell"/>
</dbReference>
<dbReference type="GO" id="GO:0016020">
    <property type="term" value="C:membrane"/>
    <property type="evidence" value="ECO:0000314"/>
    <property type="project" value="FlyBase"/>
</dbReference>
<dbReference type="GO" id="GO:0016746">
    <property type="term" value="F:acyltransferase activity"/>
    <property type="evidence" value="ECO:0000318"/>
    <property type="project" value="GO_Central"/>
</dbReference>
<dbReference type="GO" id="GO:0071617">
    <property type="term" value="F:lysophospholipid acyltransferase activity"/>
    <property type="evidence" value="ECO:0000314"/>
    <property type="project" value="FlyBase"/>
</dbReference>
<dbReference type="GO" id="GO:0008354">
    <property type="term" value="P:germ cell migration"/>
    <property type="evidence" value="ECO:0000316"/>
    <property type="project" value="FlyBase"/>
</dbReference>
<dbReference type="GO" id="GO:0030258">
    <property type="term" value="P:lipid modification"/>
    <property type="evidence" value="ECO:0000315"/>
    <property type="project" value="FlyBase"/>
</dbReference>
<dbReference type="GO" id="GO:0006644">
    <property type="term" value="P:phospholipid metabolic process"/>
    <property type="evidence" value="ECO:0007669"/>
    <property type="project" value="UniProtKB-UniPathway"/>
</dbReference>
<dbReference type="GO" id="GO:0007009">
    <property type="term" value="P:plasma membrane organization"/>
    <property type="evidence" value="ECO:0000316"/>
    <property type="project" value="FlyBase"/>
</dbReference>
<dbReference type="GO" id="GO:0007291">
    <property type="term" value="P:sperm individualization"/>
    <property type="evidence" value="ECO:0000316"/>
    <property type="project" value="FlyBase"/>
</dbReference>
<dbReference type="InterPro" id="IPR049941">
    <property type="entry name" value="LPLAT_7/PORCN-like"/>
</dbReference>
<dbReference type="InterPro" id="IPR004299">
    <property type="entry name" value="MBOAT_fam"/>
</dbReference>
<dbReference type="PANTHER" id="PTHR13906:SF4">
    <property type="entry name" value="LYSOPHOSPHOLIPID ACYLTRANSFERASE 6"/>
    <property type="match status" value="1"/>
</dbReference>
<dbReference type="PANTHER" id="PTHR13906">
    <property type="entry name" value="PORCUPINE"/>
    <property type="match status" value="1"/>
</dbReference>
<dbReference type="Pfam" id="PF03062">
    <property type="entry name" value="MBOAT"/>
    <property type="match status" value="1"/>
</dbReference>
<sequence>MLEPPKFIENDCYNGSRTFTWLADMVGLSVDLVNFLICQISALFLASLFRSMLHPSKVSSKLRHTFALSIGLAFGYFCFGQQAIHIAGLPAICYIVIRTQDPRIVQRAVLLVAMSYLLCVHLMRQLYDYGSYALDITGPLMIITQKVTSLAFSIHDGFVRGDEELTKAQQYHAIRKMPSALEYFSYVWHFQSILAGPLVFYKDYIEFVEGYNLLSTPPGNGNLDSSKREVVLEPSPTKAVIRKVVGSLVCAFIFMKFVKIYPVKDMKEDDFMNNTSMVYKYWYAMMATTCIRFKYYHAWLLADAICNNSGLGFTGYDKDGNSKWDLISNINVLSFEFSTNMRDAINNWNCGTNRWLRTLVYERVPQQYGTLLTFALSAVWHGFYPGYYLTFATGAVVVTAARTGRRLFRHRFQSTQVTRMFYDILTCLITRVVLGYATFPFVLLEFMGSIKLYLRFYLCLHIISLVTIFILPKFIRGERRLRTSNGNGNVRLSGSGNTKDAVTTSVESTAALTAGNDLNEDKEEDKHAQCKVHTPTQQQPAAGPHKTTVEQPTEQPNNVNLRSRPQQQQPHLEKKAMPPTCARDAVSVPHDQCEMDQLSSKLKEKIEAETKNIEEFIDKTVTETVSGIVEFKNDLMRDIEFPKLKLPGSNGAISLDSSNGGGLRKRNISSVHDNGTDPGHATADLHPPLEENGAAFLKKEIEVINAVVQQAVPAVLSNGHAK</sequence>
<protein>
    <recommendedName>
        <fullName>Lysophospholipid acyltransferase 6</fullName>
        <shortName>LPLAT 6</shortName>
        <ecNumber evidence="4">2.3.1.-</ecNumber>
        <ecNumber evidence="4">2.3.1.23</ecNumber>
        <ecNumber evidence="4">2.3.1.n6</ecNumber>
        <ecNumber evidence="4">2.3.1.n7</ecNumber>
    </recommendedName>
    <alternativeName>
        <fullName>Membrane-bound acyltransferase 6</fullName>
        <shortName>MBOA 6</shortName>
    </alternativeName>
    <alternativeName>
        <fullName evidence="5">Oysgedart</fullName>
        <shortName evidence="5">Oys</shortName>
    </alternativeName>
</protein>
<comment type="function">
    <text evidence="4">Acyltransferase with broad-specificity, that mediates the acylation of lysophospholipids to produce phospholipids (glycerophospholipids). Converts lysophosphatidylserine (1-acyl-2-hydroxy-sn-glycero-3-phospho-L-serine or LPS) to phosphatidylserine (1,2-diacyl-sn-glycero-3-phospho-L-serine or PS) (LPSAT activity), lysophosphatidylcholine (1-acyl-sn-glycero-3-phosphocholine or LPC) to phosphatidylcholine (1,2-diacyl-sn-glycero-3-phosphocholine or PC) (LPCAT activity), also lysophosphatidylethanolamine (1-acyl-sn-glycero-3-phosphochethanolamine or LPE) to phosphatidylchethanolamine (LPEAT activity) and lysophosphatidylglycerol (1-acyl-2-hydroxy-sn-glycero-3-phospho-(1'-sn-glycerol) or LPG) to phosphatidylglycerol (1,2-diacyl-sn-glycero-3-phospho-(1'-sn-glycerol) or PG) (LPGAT activity). Has a preference for unsaturated fatty acids of at least 16 carbons such as oleoyl-CoA ((9Z)-octadecenoyl-CoA) and palmitoleoyl-CoA ((9Z)-hexadecenoyl-CoA). Glycerophospholipids are important structural and functional components of cellular membrane, acyl-chain remodeling regulates the molecular species distribution of glycerophospholipids which can affect membrane fluidity and curvature. Essential for fertility and viability together with Nessy protein (Nes).</text>
</comment>
<comment type="catalytic activity">
    <reaction evidence="4">
        <text>a 1-acyl-sn-glycero-3-phospho-L-serine + an acyl-CoA = a 1,2-diacyl-sn-glycero-3-phospho-L-serine + CoA</text>
        <dbReference type="Rhea" id="RHEA:33191"/>
        <dbReference type="ChEBI" id="CHEBI:57262"/>
        <dbReference type="ChEBI" id="CHEBI:57287"/>
        <dbReference type="ChEBI" id="CHEBI:58342"/>
        <dbReference type="ChEBI" id="CHEBI:64379"/>
        <dbReference type="EC" id="2.3.1.n6"/>
    </reaction>
    <physiologicalReaction direction="left-to-right" evidence="4">
        <dbReference type="Rhea" id="RHEA:33192"/>
    </physiologicalReaction>
</comment>
<comment type="catalytic activity">
    <reaction evidence="4">
        <text>1-(9Z-octadecenoyl)-sn-glycero-3-phospho-L-serine + (9Z)-hexadecenoyl-CoA = 1-(9Z-octadecenoyl)-2-(9Z-hexadecenoyl)-sn-glycero-3-phospho-L-serine + CoA</text>
        <dbReference type="Rhea" id="RHEA:37399"/>
        <dbReference type="ChEBI" id="CHEBI:57287"/>
        <dbReference type="ChEBI" id="CHEBI:61540"/>
        <dbReference type="ChEBI" id="CHEBI:74617"/>
        <dbReference type="ChEBI" id="CHEBI:74901"/>
    </reaction>
    <physiologicalReaction direction="left-to-right" evidence="4">
        <dbReference type="Rhea" id="RHEA:37400"/>
    </physiologicalReaction>
</comment>
<comment type="catalytic activity">
    <reaction evidence="4">
        <text>1-(9Z-octadecenoyl)-sn-glycero-3-phospho-L-serine + (9Z)-octadecenoyl-CoA = 1,2-di-(9Z)-octadecenoyl-sn-glycero-3-phospho-L-serine + CoA</text>
        <dbReference type="Rhea" id="RHEA:37407"/>
        <dbReference type="ChEBI" id="CHEBI:57287"/>
        <dbReference type="ChEBI" id="CHEBI:57387"/>
        <dbReference type="ChEBI" id="CHEBI:74617"/>
        <dbReference type="ChEBI" id="CHEBI:74905"/>
    </reaction>
    <physiologicalReaction direction="left-to-right" evidence="4">
        <dbReference type="Rhea" id="RHEA:37408"/>
    </physiologicalReaction>
</comment>
<comment type="catalytic activity">
    <reaction evidence="4">
        <text>a 1-acyl-sn-glycero-3-phosphocholine + an acyl-CoA = a 1,2-diacyl-sn-glycero-3-phosphocholine + CoA</text>
        <dbReference type="Rhea" id="RHEA:12937"/>
        <dbReference type="ChEBI" id="CHEBI:57287"/>
        <dbReference type="ChEBI" id="CHEBI:57643"/>
        <dbReference type="ChEBI" id="CHEBI:58168"/>
        <dbReference type="ChEBI" id="CHEBI:58342"/>
        <dbReference type="EC" id="2.3.1.23"/>
    </reaction>
    <physiologicalReaction direction="left-to-right" evidence="4">
        <dbReference type="Rhea" id="RHEA:12938"/>
    </physiologicalReaction>
</comment>
<comment type="catalytic activity">
    <reaction evidence="4">
        <text>1-hexadecanoyl-sn-glycero-3-phosphocholine + (9Z)-octadecenoyl-CoA = 1-hexadecanoyl-2-(9Z-octadecenoyl)-sn-glycero-3-phosphocholine + CoA</text>
        <dbReference type="Rhea" id="RHEA:35991"/>
        <dbReference type="ChEBI" id="CHEBI:57287"/>
        <dbReference type="ChEBI" id="CHEBI:57387"/>
        <dbReference type="ChEBI" id="CHEBI:72998"/>
        <dbReference type="ChEBI" id="CHEBI:73001"/>
    </reaction>
    <physiologicalReaction direction="left-to-right" evidence="4">
        <dbReference type="Rhea" id="RHEA:35992"/>
    </physiologicalReaction>
</comment>
<comment type="catalytic activity">
    <reaction evidence="4">
        <text>(9Z)-hexadecenoyl-CoA + 1-hexadecanoyl-sn-glycero-3-phosphocholine = 1-hexadecanoyl-2-(9Z-hexadecenoyl)-sn-glycero-3-phosphocholine + CoA</text>
        <dbReference type="Rhea" id="RHEA:37207"/>
        <dbReference type="ChEBI" id="CHEBI:57287"/>
        <dbReference type="ChEBI" id="CHEBI:61540"/>
        <dbReference type="ChEBI" id="CHEBI:72998"/>
        <dbReference type="ChEBI" id="CHEBI:74000"/>
    </reaction>
    <physiologicalReaction direction="left-to-right" evidence="4">
        <dbReference type="Rhea" id="RHEA:37208"/>
    </physiologicalReaction>
</comment>
<comment type="catalytic activity">
    <reaction evidence="4">
        <text>a 1-acyl-sn-glycero-3-phosphoethanolamine + an acyl-CoA = a 1,2-diacyl-sn-glycero-3-phosphoethanolamine + CoA</text>
        <dbReference type="Rhea" id="RHEA:32995"/>
        <dbReference type="ChEBI" id="CHEBI:57287"/>
        <dbReference type="ChEBI" id="CHEBI:58342"/>
        <dbReference type="ChEBI" id="CHEBI:64381"/>
        <dbReference type="ChEBI" id="CHEBI:64612"/>
        <dbReference type="EC" id="2.3.1.n7"/>
    </reaction>
    <physiologicalReaction direction="left-to-right" evidence="4">
        <dbReference type="Rhea" id="RHEA:32996"/>
    </physiologicalReaction>
</comment>
<comment type="catalytic activity">
    <reaction evidence="4">
        <text>1-hexadecanoyl-sn-glycero-3-phosphoethanolamine + (9Z)-octadecenoyl-CoA = 1-hexadecanoyl-2-(9Z-octadecenoyl)-sn-glycero-3-phosphoethanolamine + CoA</text>
        <dbReference type="Rhea" id="RHEA:36015"/>
        <dbReference type="ChEBI" id="CHEBI:57287"/>
        <dbReference type="ChEBI" id="CHEBI:57387"/>
        <dbReference type="ChEBI" id="CHEBI:73004"/>
        <dbReference type="ChEBI" id="CHEBI:73007"/>
    </reaction>
    <physiologicalReaction direction="left-to-right" evidence="4">
        <dbReference type="Rhea" id="RHEA:36016"/>
    </physiologicalReaction>
</comment>
<comment type="catalytic activity">
    <reaction evidence="4">
        <text>1-hexadecanoyl-sn-glycero-3-phosphoethanolamine + (9Z,12Z)-octadecadienoyl-CoA = 1-hexadecanoyl-2-(9Z,12Z-octadecadienoyl)-sn-glycero-3-phosphoethanolamine + CoA</text>
        <dbReference type="Rhea" id="RHEA:36019"/>
        <dbReference type="ChEBI" id="CHEBI:57287"/>
        <dbReference type="ChEBI" id="CHEBI:57383"/>
        <dbReference type="ChEBI" id="CHEBI:73004"/>
        <dbReference type="ChEBI" id="CHEBI:73008"/>
    </reaction>
    <physiologicalReaction direction="left-to-right" evidence="4">
        <dbReference type="Rhea" id="RHEA:36020"/>
    </physiologicalReaction>
</comment>
<comment type="catalytic activity">
    <reaction evidence="4">
        <text>1-hexadecanoyl-sn-glycero-3-phosphoethanolamine + (9Z)-hexadecenoyl-CoA = 1-hexadecanoyl-2-(9Z)-hexadecenoyl-sn-glycero-3-phosphoethanolamine + CoA</text>
        <dbReference type="Rhea" id="RHEA:37419"/>
        <dbReference type="ChEBI" id="CHEBI:57287"/>
        <dbReference type="ChEBI" id="CHEBI:61540"/>
        <dbReference type="ChEBI" id="CHEBI:73004"/>
        <dbReference type="ChEBI" id="CHEBI:73999"/>
    </reaction>
    <physiologicalReaction direction="left-to-right" evidence="4">
        <dbReference type="Rhea" id="RHEA:37420"/>
    </physiologicalReaction>
</comment>
<comment type="catalytic activity">
    <reaction evidence="4">
        <text>1-(9Z-octadecenoyl)-sn-glycero-3-phospho-(1'-sn-glycerol) + (9Z)-octadecenoyl-CoA = 1,2-di-(9Z-octadecenoyl)-sn-glycero-3-phospho-(1'-sn-glycerol) + CoA</text>
        <dbReference type="Rhea" id="RHEA:37651"/>
        <dbReference type="ChEBI" id="CHEBI:57287"/>
        <dbReference type="ChEBI" id="CHEBI:57387"/>
        <dbReference type="ChEBI" id="CHEBI:72828"/>
        <dbReference type="ChEBI" id="CHEBI:75163"/>
    </reaction>
    <physiologicalReaction direction="left-to-right" evidence="4">
        <dbReference type="Rhea" id="RHEA:37652"/>
    </physiologicalReaction>
</comment>
<comment type="pathway">
    <text evidence="4">Lipid metabolism; phospholipid metabolism.</text>
</comment>
<comment type="subcellular location">
    <subcellularLocation>
        <location evidence="4">Endoplasmic reticulum</location>
    </subcellularLocation>
    <subcellularLocation>
        <location evidence="4">Membrane</location>
        <topology evidence="6">Multi-pass membrane protein</topology>
    </subcellularLocation>
</comment>
<comment type="alternative products">
    <event type="alternative initiation"/>
    <isoform>
        <id>Q6NN55-1</id>
        <name>A,B,E</name>
        <sequence type="displayed"/>
    </isoform>
    <isoform>
        <id>Q6NN55-2</id>
        <name>D</name>
        <sequence type="described" ref="VSP_061130"/>
    </isoform>
</comment>
<comment type="miscellaneous">
    <text evidence="5">'Oysgedart' is a Yiddish word meaning skinny, chosen because of this protein's role in phospholipid synthesis.</text>
</comment>
<comment type="similarity">
    <text evidence="6">Belongs to the membrane-bound acyltransferase family.</text>
</comment>
<keyword id="KW-0012">Acyltransferase</keyword>
<keyword id="KW-0024">Alternative initiation</keyword>
<keyword id="KW-0256">Endoplasmic reticulum</keyword>
<keyword id="KW-0472">Membrane</keyword>
<keyword id="KW-1185">Reference proteome</keyword>
<keyword id="KW-0808">Transferase</keyword>
<keyword id="KW-0812">Transmembrane</keyword>
<keyword id="KW-1133">Transmembrane helix</keyword>
<gene>
    <name evidence="5 7 9" type="primary">oys</name>
    <name evidence="8 9" type="ORF">CG18445</name>
</gene>
<evidence type="ECO:0000250" key="1">
    <source>
        <dbReference type="UniProtKB" id="P0C7A3"/>
    </source>
</evidence>
<evidence type="ECO:0000255" key="2"/>
<evidence type="ECO:0000256" key="3">
    <source>
        <dbReference type="SAM" id="MobiDB-lite"/>
    </source>
</evidence>
<evidence type="ECO:0000269" key="4">
    <source>
    </source>
</evidence>
<evidence type="ECO:0000303" key="5">
    <source>
    </source>
</evidence>
<evidence type="ECO:0000305" key="6"/>
<evidence type="ECO:0000312" key="7">
    <source>
        <dbReference type="EMBL" id="AAF58858.1"/>
    </source>
</evidence>
<evidence type="ECO:0000312" key="8">
    <source>
        <dbReference type="EMBL" id="AAR99097.1"/>
    </source>
</evidence>
<evidence type="ECO:0000312" key="9">
    <source>
        <dbReference type="FlyBase" id="FBgn0033476"/>
    </source>
</evidence>
<feature type="chain" id="PRO_0000453372" description="Lysophospholipid acyltransferase 6">
    <location>
        <begin position="1"/>
        <end position="722"/>
    </location>
</feature>
<feature type="transmembrane region" description="Helical" evidence="2">
    <location>
        <begin position="25"/>
        <end position="45"/>
    </location>
</feature>
<feature type="transmembrane region" description="Helical" evidence="2">
    <location>
        <begin position="62"/>
        <end position="84"/>
    </location>
</feature>
<feature type="transmembrane region" description="Helical" evidence="2">
    <location>
        <begin position="104"/>
        <end position="123"/>
    </location>
</feature>
<feature type="transmembrane region" description="Helical" evidence="2">
    <location>
        <begin position="180"/>
        <end position="200"/>
    </location>
</feature>
<feature type="transmembrane region" description="Helical" evidence="2">
    <location>
        <begin position="243"/>
        <end position="263"/>
    </location>
</feature>
<feature type="transmembrane region" description="Helical" evidence="2">
    <location>
        <begin position="378"/>
        <end position="398"/>
    </location>
</feature>
<feature type="transmembrane region" description="Helical" evidence="2">
    <location>
        <begin position="424"/>
        <end position="444"/>
    </location>
</feature>
<feature type="transmembrane region" description="Helical" evidence="2">
    <location>
        <begin position="452"/>
        <end position="472"/>
    </location>
</feature>
<feature type="region of interest" description="Disordered" evidence="3">
    <location>
        <begin position="485"/>
        <end position="582"/>
    </location>
</feature>
<feature type="region of interest" description="Disordered" evidence="3">
    <location>
        <begin position="650"/>
        <end position="687"/>
    </location>
</feature>
<feature type="compositionally biased region" description="Polar residues" evidence="3">
    <location>
        <begin position="485"/>
        <end position="511"/>
    </location>
</feature>
<feature type="compositionally biased region" description="Polar residues" evidence="3">
    <location>
        <begin position="549"/>
        <end position="570"/>
    </location>
</feature>
<feature type="active site" evidence="1">
    <location>
        <position position="349"/>
    </location>
</feature>
<feature type="active site" evidence="1">
    <location>
        <position position="381"/>
    </location>
</feature>
<feature type="splice variant" id="VSP_061130" description="In isoform D.">
    <original>MLEPPKFIENDCYNGSRTFTWLADMVGLSV</original>
    <variation>MCSASADGSK</variation>
    <location>
        <begin position="1"/>
        <end position="30"/>
    </location>
</feature>
<name>MBOA6_DROME</name>
<proteinExistence type="evidence at protein level"/>